<gene>
    <name type="primary">terf2ip</name>
    <name type="synonym">rap1</name>
</gene>
<proteinExistence type="evidence at transcript level"/>
<feature type="chain" id="PRO_0000398643" description="Telomeric repeat-binding factor 2-interacting protein 1">
    <location>
        <begin position="1"/>
        <end position="616"/>
    </location>
</feature>
<feature type="domain" description="BRCT" evidence="4">
    <location>
        <begin position="15"/>
        <end position="98"/>
    </location>
</feature>
<feature type="domain" description="Myb-like">
    <location>
        <begin position="112"/>
        <end position="169"/>
    </location>
</feature>
<feature type="region of interest" description="Disordered" evidence="5">
    <location>
        <begin position="174"/>
        <end position="518"/>
    </location>
</feature>
<feature type="short sequence motif" description="Nuclear localization signal" evidence="3">
    <location>
        <begin position="597"/>
        <end position="613"/>
    </location>
</feature>
<feature type="compositionally biased region" description="Low complexity" evidence="5">
    <location>
        <begin position="232"/>
        <end position="245"/>
    </location>
</feature>
<feature type="compositionally biased region" description="Polar residues" evidence="5">
    <location>
        <begin position="246"/>
        <end position="255"/>
    </location>
</feature>
<feature type="compositionally biased region" description="Basic and acidic residues" evidence="5">
    <location>
        <begin position="271"/>
        <end position="288"/>
    </location>
</feature>
<feature type="compositionally biased region" description="Basic and acidic residues" evidence="5">
    <location>
        <begin position="344"/>
        <end position="358"/>
    </location>
</feature>
<feature type="compositionally biased region" description="Polar residues" evidence="5">
    <location>
        <begin position="363"/>
        <end position="382"/>
    </location>
</feature>
<feature type="compositionally biased region" description="Polar residues" evidence="5">
    <location>
        <begin position="397"/>
        <end position="415"/>
    </location>
</feature>
<feature type="compositionally biased region" description="Acidic residues" evidence="5">
    <location>
        <begin position="431"/>
        <end position="444"/>
    </location>
</feature>
<feature type="compositionally biased region" description="Basic and acidic residues" evidence="5">
    <location>
        <begin position="468"/>
        <end position="480"/>
    </location>
</feature>
<feature type="splice variant" id="VSP_039790" description="In isoform 2." evidence="6">
    <original>QPDSPMSEEERPGPSSAVVPPSLNSSTSCSHIRETPEETLSRDLLEVKEQVINLMRETKKDLVEVTKALLKASGDLKRAQVFLLNGYDHETHGPLWTRLDDETLLAADPYELEQLQSKFGEEEVTRRKSFLATDVK</original>
    <variation>CWRSRSRSLI</variation>
    <location>
        <begin position="481"/>
        <end position="616"/>
    </location>
</feature>
<reference key="1">
    <citation type="submission" date="2004-02" db="EMBL/GenBank/DDBJ databases">
        <authorList>
            <consortium name="NIH - Zebrafish Gene Collection (ZGC) project"/>
        </authorList>
    </citation>
    <scope>NUCLEOTIDE SEQUENCE [LARGE SCALE MRNA] (ISOFORMS 1 AND 2)</scope>
    <source>
        <tissue>Kidney</tissue>
    </source>
</reference>
<protein>
    <recommendedName>
        <fullName>Telomeric repeat-binding factor 2-interacting protein 1</fullName>
        <shortName>TERF2-interacting telomeric protein 1</shortName>
        <shortName>TRF2-interacting telomeric protein 1</shortName>
    </recommendedName>
    <alternativeName>
        <fullName>Repressor/activator protein 1 homolog</fullName>
        <shortName>RAP1 homolog</shortName>
    </alternativeName>
</protein>
<keyword id="KW-0010">Activator</keyword>
<keyword id="KW-0025">Alternative splicing</keyword>
<keyword id="KW-0158">Chromosome</keyword>
<keyword id="KW-0539">Nucleus</keyword>
<keyword id="KW-1185">Reference proteome</keyword>
<keyword id="KW-0779">Telomere</keyword>
<keyword id="KW-0804">Transcription</keyword>
<keyword id="KW-0805">Transcription regulation</keyword>
<evidence type="ECO:0000250" key="1"/>
<evidence type="ECO:0000250" key="2">
    <source>
        <dbReference type="UniProtKB" id="Q91VL8"/>
    </source>
</evidence>
<evidence type="ECO:0000255" key="3"/>
<evidence type="ECO:0000255" key="4">
    <source>
        <dbReference type="PROSITE-ProRule" id="PRU00033"/>
    </source>
</evidence>
<evidence type="ECO:0000256" key="5">
    <source>
        <dbReference type="SAM" id="MobiDB-lite"/>
    </source>
</evidence>
<evidence type="ECO:0000303" key="6">
    <source ref="1"/>
</evidence>
<evidence type="ECO:0000305" key="7"/>
<comment type="function">
    <text evidence="1">Acts both as a regulator of telomere function and as a transcription regulator. Involved in the regulation of telomere length and protection as a component of the shelterin complex (telosome). Does not bind DNA directly: recruited to telomeric double-stranded 5'-TTAGGG-3' repeats via its interaction with terf2. Independently of its function in telomeres, also acts as a transcription regulator: recruited to extratelomeric 5'-TTAGGG-3' sites via its association with terf2 or other factors, and regulates gene expression (By similarity).</text>
</comment>
<comment type="subunit">
    <text evidence="1">Homodimer. Component of the shelterin complex (telosome). Interacts with terf2; the interaction is direct (By similarity).</text>
</comment>
<comment type="subcellular location">
    <subcellularLocation>
        <location evidence="2">Nucleus</location>
    </subcellularLocation>
    <subcellularLocation>
        <location evidence="2">Chromosome</location>
        <location evidence="2">Telomere</location>
    </subcellularLocation>
</comment>
<comment type="alternative products">
    <event type="alternative splicing"/>
    <isoform>
        <id>Q6NYJ3-1</id>
        <name>1</name>
        <sequence type="displayed"/>
    </isoform>
    <isoform>
        <id>Q6NYJ3-2</id>
        <name>2</name>
        <sequence type="described" ref="VSP_039790"/>
    </isoform>
</comment>
<comment type="similarity">
    <text evidence="7">Belongs to the RAP1 family.</text>
</comment>
<comment type="sequence caution" evidence="7">
    <conflict type="erroneous initiation">
        <sequence resource="EMBL-CDS" id="AAH66572"/>
    </conflict>
    <text>Extended N-terminus.</text>
</comment>
<comment type="sequence caution" evidence="7">
    <conflict type="erroneous initiation">
        <sequence resource="EMBL-CDS" id="AAH90914"/>
    </conflict>
    <text>Extended N-terminus.</text>
</comment>
<organism>
    <name type="scientific">Danio rerio</name>
    <name type="common">Zebrafish</name>
    <name type="synonym">Brachydanio rerio</name>
    <dbReference type="NCBI Taxonomy" id="7955"/>
    <lineage>
        <taxon>Eukaryota</taxon>
        <taxon>Metazoa</taxon>
        <taxon>Chordata</taxon>
        <taxon>Craniata</taxon>
        <taxon>Vertebrata</taxon>
        <taxon>Euteleostomi</taxon>
        <taxon>Actinopterygii</taxon>
        <taxon>Neopterygii</taxon>
        <taxon>Teleostei</taxon>
        <taxon>Ostariophysi</taxon>
        <taxon>Cypriniformes</taxon>
        <taxon>Danionidae</taxon>
        <taxon>Danioninae</taxon>
        <taxon>Danio</taxon>
    </lineage>
</organism>
<accession>Q6NYJ3</accession>
<accession>Q5BKV6</accession>
<name>TE2IP_DANRE</name>
<sequence length="616" mass="68075">MSKKKEASKISPVLFLDPGGQSMRFYVRPGPTKMQLHPLITSGGGNLCRNQEPGAILLIDPTDATNVTQNTGQKYISTKYILDCVEQNQQLDPNDYAIIIGPSVQTRMALRNQGSGRLGYSSEEDAAILKFIEKRQQDAKGNLVWKEMEKRHVTEHSWQSMKDRFLKHLQQKLADKPTKKSPIKRKPLSFTQSPLRKKKVVEISEDESVQKGDCPEAPMATETGSINPPASPERASSPPEEPQAAGQPSQASSNDSQDETCVLVIETPESENPRLDEDAPDASNEHSSLKKKRRKTCKTSTTDSRSSRLEEDPVGQDIPDESNAQSSPKKKRQKACKTSTTDSRSSRLEENPDRRDIPDESTEQSSPNKSQMTSKISTSDSGNPIGDQGCDNPHGCNANSSPSKTRQTNSEASTPDSKKLGILAKAAKEFEDSDVMDDSEECENPCEVPIAEPSDAQESSATPATLVREPESQAEHHEETQPDSPMSEEERPGPSSAVVPPSLNSSTSCSHIRETPEETLSRDLLEVKEQVINLMRETKKDLVEVTKALLKASGDLKRAQVFLLNGYDHETHGPLWTRLDDETLLAADPYELEQLQSKFGEEEVTRRKSFLATDVK</sequence>
<dbReference type="EMBL" id="BC066572">
    <property type="protein sequence ID" value="AAH66572.1"/>
    <property type="status" value="ALT_INIT"/>
    <property type="molecule type" value="mRNA"/>
</dbReference>
<dbReference type="EMBL" id="BC090914">
    <property type="protein sequence ID" value="AAH90914.1"/>
    <property type="status" value="ALT_INIT"/>
    <property type="molecule type" value="mRNA"/>
</dbReference>
<dbReference type="SMR" id="Q6NYJ3"/>
<dbReference type="FunCoup" id="Q6NYJ3">
    <property type="interactions" value="303"/>
</dbReference>
<dbReference type="STRING" id="7955.ENSDARP00000144881"/>
<dbReference type="PaxDb" id="7955-ENSDARP00000051258"/>
<dbReference type="AGR" id="ZFIN:ZDB-GENE-131121-641"/>
<dbReference type="ZFIN" id="ZDB-GENE-131121-641">
    <property type="gene designation" value="terf2ip"/>
</dbReference>
<dbReference type="eggNOG" id="ENOG502RPXS">
    <property type="taxonomic scope" value="Eukaryota"/>
</dbReference>
<dbReference type="InParanoid" id="Q6NYJ3"/>
<dbReference type="PhylomeDB" id="Q6NYJ3"/>
<dbReference type="PRO" id="PR:Q6NYJ3"/>
<dbReference type="Proteomes" id="UP000000437">
    <property type="component" value="Unplaced"/>
</dbReference>
<dbReference type="GO" id="GO:0000781">
    <property type="term" value="C:chromosome, telomeric region"/>
    <property type="evidence" value="ECO:0000250"/>
    <property type="project" value="UniProtKB"/>
</dbReference>
<dbReference type="GO" id="GO:0005737">
    <property type="term" value="C:cytoplasm"/>
    <property type="evidence" value="ECO:0000250"/>
    <property type="project" value="UniProtKB"/>
</dbReference>
<dbReference type="GO" id="GO:0005634">
    <property type="term" value="C:nucleus"/>
    <property type="evidence" value="ECO:0000250"/>
    <property type="project" value="UniProtKB"/>
</dbReference>
<dbReference type="GO" id="GO:0070187">
    <property type="term" value="C:shelterin complex"/>
    <property type="evidence" value="ECO:0000318"/>
    <property type="project" value="GO_Central"/>
</dbReference>
<dbReference type="GO" id="GO:0042162">
    <property type="term" value="F:telomeric DNA binding"/>
    <property type="evidence" value="ECO:0000318"/>
    <property type="project" value="GO_Central"/>
</dbReference>
<dbReference type="GO" id="GO:0048239">
    <property type="term" value="P:negative regulation of DNA recombination at telomere"/>
    <property type="evidence" value="ECO:0000250"/>
    <property type="project" value="UniProtKB"/>
</dbReference>
<dbReference type="GO" id="GO:0043123">
    <property type="term" value="P:positive regulation of canonical NF-kappaB signal transduction"/>
    <property type="evidence" value="ECO:0000250"/>
    <property type="project" value="UniProtKB"/>
</dbReference>
<dbReference type="GO" id="GO:0051092">
    <property type="term" value="P:positive regulation of NF-kappaB transcription factor activity"/>
    <property type="evidence" value="ECO:0000250"/>
    <property type="project" value="UniProtKB"/>
</dbReference>
<dbReference type="GO" id="GO:0031848">
    <property type="term" value="P:protection from non-homologous end joining at telomere"/>
    <property type="evidence" value="ECO:0000318"/>
    <property type="project" value="GO_Central"/>
</dbReference>
<dbReference type="GO" id="GO:0006355">
    <property type="term" value="P:regulation of DNA-templated transcription"/>
    <property type="evidence" value="ECO:0000250"/>
    <property type="project" value="UniProtKB"/>
</dbReference>
<dbReference type="GO" id="GO:0010569">
    <property type="term" value="P:regulation of double-strand break repair via homologous recombination"/>
    <property type="evidence" value="ECO:0000250"/>
    <property type="project" value="UniProtKB"/>
</dbReference>
<dbReference type="GO" id="GO:0010833">
    <property type="term" value="P:telomere maintenance via telomere lengthening"/>
    <property type="evidence" value="ECO:0000250"/>
    <property type="project" value="UniProtKB"/>
</dbReference>
<dbReference type="CDD" id="cd11655">
    <property type="entry name" value="rap1_myb-like"/>
    <property type="match status" value="1"/>
</dbReference>
<dbReference type="CDD" id="cd11653">
    <property type="entry name" value="rap1_RCT"/>
    <property type="match status" value="1"/>
</dbReference>
<dbReference type="FunFam" id="1.10.10.60:FF:000246">
    <property type="entry name" value="Telomeric repeat-binding factor 2-interacting protein 1"/>
    <property type="match status" value="1"/>
</dbReference>
<dbReference type="Gene3D" id="1.10.10.2170">
    <property type="match status" value="1"/>
</dbReference>
<dbReference type="Gene3D" id="3.40.50.10190">
    <property type="entry name" value="BRCT domain"/>
    <property type="match status" value="1"/>
</dbReference>
<dbReference type="Gene3D" id="1.10.10.60">
    <property type="entry name" value="Homeodomain-like"/>
    <property type="match status" value="1"/>
</dbReference>
<dbReference type="InterPro" id="IPR001357">
    <property type="entry name" value="BRCT_dom"/>
</dbReference>
<dbReference type="InterPro" id="IPR036420">
    <property type="entry name" value="BRCT_dom_sf"/>
</dbReference>
<dbReference type="InterPro" id="IPR009057">
    <property type="entry name" value="Homeodomain-like_sf"/>
</dbReference>
<dbReference type="InterPro" id="IPR021661">
    <property type="entry name" value="Rap1_C"/>
</dbReference>
<dbReference type="InterPro" id="IPR038104">
    <property type="entry name" value="Rap1_C_sf"/>
</dbReference>
<dbReference type="InterPro" id="IPR039595">
    <property type="entry name" value="TE2IP/Rap1"/>
</dbReference>
<dbReference type="InterPro" id="IPR015010">
    <property type="entry name" value="TERF2IP_Myb"/>
</dbReference>
<dbReference type="PANTHER" id="PTHR16466">
    <property type="entry name" value="TELOMERE REPEAT-BINDING FACTOR 2-INTERACTING PROTEIN 1"/>
    <property type="match status" value="1"/>
</dbReference>
<dbReference type="PANTHER" id="PTHR16466:SF6">
    <property type="entry name" value="TELOMERIC REPEAT-BINDING FACTOR 2-INTERACTING PROTEIN 1"/>
    <property type="match status" value="1"/>
</dbReference>
<dbReference type="Pfam" id="PF16589">
    <property type="entry name" value="BRCT_2"/>
    <property type="match status" value="1"/>
</dbReference>
<dbReference type="Pfam" id="PF08914">
    <property type="entry name" value="Myb_Rap1"/>
    <property type="match status" value="1"/>
</dbReference>
<dbReference type="Pfam" id="PF11626">
    <property type="entry name" value="Rap1_C"/>
    <property type="match status" value="1"/>
</dbReference>
<dbReference type="SUPFAM" id="SSF52113">
    <property type="entry name" value="BRCT domain"/>
    <property type="match status" value="1"/>
</dbReference>
<dbReference type="SUPFAM" id="SSF46689">
    <property type="entry name" value="Homeodomain-like"/>
    <property type="match status" value="1"/>
</dbReference>
<dbReference type="PROSITE" id="PS50172">
    <property type="entry name" value="BRCT"/>
    <property type="match status" value="1"/>
</dbReference>